<comment type="function">
    <text evidence="1">DNA ligase that catalyzes the formation of phosphodiester linkages between 5'-phosphoryl and 3'-hydroxyl groups in double-stranded DNA using NAD as a coenzyme and as the energy source for the reaction. It is essential for DNA replication and repair of damaged DNA.</text>
</comment>
<comment type="catalytic activity">
    <reaction evidence="1">
        <text>NAD(+) + (deoxyribonucleotide)n-3'-hydroxyl + 5'-phospho-(deoxyribonucleotide)m = (deoxyribonucleotide)n+m + AMP + beta-nicotinamide D-nucleotide.</text>
        <dbReference type="EC" id="6.5.1.2"/>
    </reaction>
</comment>
<comment type="cofactor">
    <cofactor evidence="1">
        <name>Mg(2+)</name>
        <dbReference type="ChEBI" id="CHEBI:18420"/>
    </cofactor>
    <cofactor evidence="1">
        <name>Mn(2+)</name>
        <dbReference type="ChEBI" id="CHEBI:29035"/>
    </cofactor>
</comment>
<comment type="similarity">
    <text evidence="1">Belongs to the NAD-dependent DNA ligase family. LigA subfamily.</text>
</comment>
<keyword id="KW-0227">DNA damage</keyword>
<keyword id="KW-0234">DNA repair</keyword>
<keyword id="KW-0235">DNA replication</keyword>
<keyword id="KW-0436">Ligase</keyword>
<keyword id="KW-0460">Magnesium</keyword>
<keyword id="KW-0464">Manganese</keyword>
<keyword id="KW-0479">Metal-binding</keyword>
<keyword id="KW-0520">NAD</keyword>
<keyword id="KW-0862">Zinc</keyword>
<name>DNLJ_CHLPB</name>
<reference key="1">
    <citation type="submission" date="2008-06" db="EMBL/GenBank/DDBJ databases">
        <title>Complete sequence of Chlorobium phaeobacteroides BS1.</title>
        <authorList>
            <consortium name="US DOE Joint Genome Institute"/>
            <person name="Lucas S."/>
            <person name="Copeland A."/>
            <person name="Lapidus A."/>
            <person name="Glavina del Rio T."/>
            <person name="Dalin E."/>
            <person name="Tice H."/>
            <person name="Bruce D."/>
            <person name="Goodwin L."/>
            <person name="Pitluck S."/>
            <person name="Schmutz J."/>
            <person name="Larimer F."/>
            <person name="Land M."/>
            <person name="Hauser L."/>
            <person name="Kyrpides N."/>
            <person name="Ovchinnikova G."/>
            <person name="Li T."/>
            <person name="Liu Z."/>
            <person name="Zhao F."/>
            <person name="Overmann J."/>
            <person name="Bryant D.A."/>
            <person name="Richardson P."/>
        </authorList>
    </citation>
    <scope>NUCLEOTIDE SEQUENCE [LARGE SCALE GENOMIC DNA]</scope>
    <source>
        <strain>BS1</strain>
    </source>
</reference>
<dbReference type="EC" id="6.5.1.2" evidence="1"/>
<dbReference type="EMBL" id="CP001101">
    <property type="protein sequence ID" value="ACE03427.1"/>
    <property type="molecule type" value="Genomic_DNA"/>
</dbReference>
<dbReference type="SMR" id="B3EM49"/>
<dbReference type="STRING" id="331678.Cphamn1_0463"/>
<dbReference type="KEGG" id="cpb:Cphamn1_0463"/>
<dbReference type="eggNOG" id="COG0272">
    <property type="taxonomic scope" value="Bacteria"/>
</dbReference>
<dbReference type="HOGENOM" id="CLU_007764_2_1_10"/>
<dbReference type="OrthoDB" id="9759736at2"/>
<dbReference type="GO" id="GO:0005829">
    <property type="term" value="C:cytosol"/>
    <property type="evidence" value="ECO:0007669"/>
    <property type="project" value="TreeGrafter"/>
</dbReference>
<dbReference type="GO" id="GO:0003677">
    <property type="term" value="F:DNA binding"/>
    <property type="evidence" value="ECO:0007669"/>
    <property type="project" value="InterPro"/>
</dbReference>
<dbReference type="GO" id="GO:0003911">
    <property type="term" value="F:DNA ligase (NAD+) activity"/>
    <property type="evidence" value="ECO:0007669"/>
    <property type="project" value="UniProtKB-UniRule"/>
</dbReference>
<dbReference type="GO" id="GO:0046872">
    <property type="term" value="F:metal ion binding"/>
    <property type="evidence" value="ECO:0007669"/>
    <property type="project" value="UniProtKB-KW"/>
</dbReference>
<dbReference type="GO" id="GO:0006281">
    <property type="term" value="P:DNA repair"/>
    <property type="evidence" value="ECO:0007669"/>
    <property type="project" value="UniProtKB-KW"/>
</dbReference>
<dbReference type="GO" id="GO:0006260">
    <property type="term" value="P:DNA replication"/>
    <property type="evidence" value="ECO:0007669"/>
    <property type="project" value="UniProtKB-KW"/>
</dbReference>
<dbReference type="CDD" id="cd17748">
    <property type="entry name" value="BRCT_DNA_ligase_like"/>
    <property type="match status" value="1"/>
</dbReference>
<dbReference type="CDD" id="cd00114">
    <property type="entry name" value="LIGANc"/>
    <property type="match status" value="1"/>
</dbReference>
<dbReference type="FunFam" id="1.10.150.20:FF:000006">
    <property type="entry name" value="DNA ligase"/>
    <property type="match status" value="1"/>
</dbReference>
<dbReference type="FunFam" id="1.10.150.20:FF:000007">
    <property type="entry name" value="DNA ligase"/>
    <property type="match status" value="1"/>
</dbReference>
<dbReference type="FunFam" id="2.40.50.140:FF:000012">
    <property type="entry name" value="DNA ligase"/>
    <property type="match status" value="1"/>
</dbReference>
<dbReference type="Gene3D" id="6.20.10.30">
    <property type="match status" value="1"/>
</dbReference>
<dbReference type="Gene3D" id="1.10.150.20">
    <property type="entry name" value="5' to 3' exonuclease, C-terminal subdomain"/>
    <property type="match status" value="2"/>
</dbReference>
<dbReference type="Gene3D" id="3.40.50.10190">
    <property type="entry name" value="BRCT domain"/>
    <property type="match status" value="1"/>
</dbReference>
<dbReference type="Gene3D" id="3.30.470.30">
    <property type="entry name" value="DNA ligase/mRNA capping enzyme"/>
    <property type="match status" value="1"/>
</dbReference>
<dbReference type="Gene3D" id="1.10.287.610">
    <property type="entry name" value="Helix hairpin bin"/>
    <property type="match status" value="1"/>
</dbReference>
<dbReference type="Gene3D" id="2.40.50.140">
    <property type="entry name" value="Nucleic acid-binding proteins"/>
    <property type="match status" value="1"/>
</dbReference>
<dbReference type="HAMAP" id="MF_01588">
    <property type="entry name" value="DNA_ligase_A"/>
    <property type="match status" value="1"/>
</dbReference>
<dbReference type="InterPro" id="IPR001357">
    <property type="entry name" value="BRCT_dom"/>
</dbReference>
<dbReference type="InterPro" id="IPR036420">
    <property type="entry name" value="BRCT_dom_sf"/>
</dbReference>
<dbReference type="InterPro" id="IPR041663">
    <property type="entry name" value="DisA/LigA_HHH"/>
</dbReference>
<dbReference type="InterPro" id="IPR001679">
    <property type="entry name" value="DNA_ligase"/>
</dbReference>
<dbReference type="InterPro" id="IPR018239">
    <property type="entry name" value="DNA_ligase_AS"/>
</dbReference>
<dbReference type="InterPro" id="IPR013839">
    <property type="entry name" value="DNAligase_adenylation"/>
</dbReference>
<dbReference type="InterPro" id="IPR013840">
    <property type="entry name" value="DNAligase_N"/>
</dbReference>
<dbReference type="InterPro" id="IPR003583">
    <property type="entry name" value="Hlx-hairpin-Hlx_DNA-bd_motif"/>
</dbReference>
<dbReference type="InterPro" id="IPR012340">
    <property type="entry name" value="NA-bd_OB-fold"/>
</dbReference>
<dbReference type="InterPro" id="IPR004150">
    <property type="entry name" value="NAD_DNA_ligase_OB"/>
</dbReference>
<dbReference type="InterPro" id="IPR010994">
    <property type="entry name" value="RuvA_2-like"/>
</dbReference>
<dbReference type="InterPro" id="IPR004149">
    <property type="entry name" value="Znf_DNAligase_C4"/>
</dbReference>
<dbReference type="NCBIfam" id="TIGR00575">
    <property type="entry name" value="dnlj"/>
    <property type="match status" value="1"/>
</dbReference>
<dbReference type="NCBIfam" id="NF005932">
    <property type="entry name" value="PRK07956.1"/>
    <property type="match status" value="1"/>
</dbReference>
<dbReference type="PANTHER" id="PTHR23389">
    <property type="entry name" value="CHROMOSOME TRANSMISSION FIDELITY FACTOR 18"/>
    <property type="match status" value="1"/>
</dbReference>
<dbReference type="PANTHER" id="PTHR23389:SF9">
    <property type="entry name" value="DNA LIGASE"/>
    <property type="match status" value="1"/>
</dbReference>
<dbReference type="Pfam" id="PF00533">
    <property type="entry name" value="BRCT"/>
    <property type="match status" value="1"/>
</dbReference>
<dbReference type="Pfam" id="PF01653">
    <property type="entry name" value="DNA_ligase_aden"/>
    <property type="match status" value="1"/>
</dbReference>
<dbReference type="Pfam" id="PF03120">
    <property type="entry name" value="DNA_ligase_OB"/>
    <property type="match status" value="1"/>
</dbReference>
<dbReference type="Pfam" id="PF03119">
    <property type="entry name" value="DNA_ligase_ZBD"/>
    <property type="match status" value="1"/>
</dbReference>
<dbReference type="Pfam" id="PF12826">
    <property type="entry name" value="HHH_2"/>
    <property type="match status" value="1"/>
</dbReference>
<dbReference type="PIRSF" id="PIRSF001604">
    <property type="entry name" value="LigA"/>
    <property type="match status" value="1"/>
</dbReference>
<dbReference type="SMART" id="SM00292">
    <property type="entry name" value="BRCT"/>
    <property type="match status" value="1"/>
</dbReference>
<dbReference type="SMART" id="SM00278">
    <property type="entry name" value="HhH1"/>
    <property type="match status" value="3"/>
</dbReference>
<dbReference type="SMART" id="SM00532">
    <property type="entry name" value="LIGANc"/>
    <property type="match status" value="1"/>
</dbReference>
<dbReference type="SUPFAM" id="SSF52113">
    <property type="entry name" value="BRCT domain"/>
    <property type="match status" value="1"/>
</dbReference>
<dbReference type="SUPFAM" id="SSF56091">
    <property type="entry name" value="DNA ligase/mRNA capping enzyme, catalytic domain"/>
    <property type="match status" value="1"/>
</dbReference>
<dbReference type="SUPFAM" id="SSF50249">
    <property type="entry name" value="Nucleic acid-binding proteins"/>
    <property type="match status" value="1"/>
</dbReference>
<dbReference type="SUPFAM" id="SSF47781">
    <property type="entry name" value="RuvA domain 2-like"/>
    <property type="match status" value="1"/>
</dbReference>
<dbReference type="PROSITE" id="PS50172">
    <property type="entry name" value="BRCT"/>
    <property type="match status" value="1"/>
</dbReference>
<dbReference type="PROSITE" id="PS01055">
    <property type="entry name" value="DNA_LIGASE_N1"/>
    <property type="match status" value="1"/>
</dbReference>
<protein>
    <recommendedName>
        <fullName evidence="1">DNA ligase</fullName>
        <ecNumber evidence="1">6.5.1.2</ecNumber>
    </recommendedName>
    <alternativeName>
        <fullName evidence="1">Polydeoxyribonucleotide synthase [NAD(+)]</fullName>
    </alternativeName>
</protein>
<evidence type="ECO:0000255" key="1">
    <source>
        <dbReference type="HAMAP-Rule" id="MF_01588"/>
    </source>
</evidence>
<organism>
    <name type="scientific">Chlorobium phaeobacteroides (strain BS1)</name>
    <dbReference type="NCBI Taxonomy" id="331678"/>
    <lineage>
        <taxon>Bacteria</taxon>
        <taxon>Pseudomonadati</taxon>
        <taxon>Chlorobiota</taxon>
        <taxon>Chlorobiia</taxon>
        <taxon>Chlorobiales</taxon>
        <taxon>Chlorobiaceae</taxon>
        <taxon>Chlorobium/Pelodictyon group</taxon>
        <taxon>Chlorobium</taxon>
    </lineage>
</organism>
<feature type="chain" id="PRO_0000380334" description="DNA ligase">
    <location>
        <begin position="1"/>
        <end position="684"/>
    </location>
</feature>
<feature type="domain" description="BRCT" evidence="1">
    <location>
        <begin position="601"/>
        <end position="684"/>
    </location>
</feature>
<feature type="active site" description="N6-AMP-lysine intermediate" evidence="1">
    <location>
        <position position="119"/>
    </location>
</feature>
<feature type="binding site" evidence="1">
    <location>
        <begin position="34"/>
        <end position="38"/>
    </location>
    <ligand>
        <name>NAD(+)</name>
        <dbReference type="ChEBI" id="CHEBI:57540"/>
    </ligand>
</feature>
<feature type="binding site" evidence="1">
    <location>
        <begin position="83"/>
        <end position="84"/>
    </location>
    <ligand>
        <name>NAD(+)</name>
        <dbReference type="ChEBI" id="CHEBI:57540"/>
    </ligand>
</feature>
<feature type="binding site" evidence="1">
    <location>
        <position position="117"/>
    </location>
    <ligand>
        <name>NAD(+)</name>
        <dbReference type="ChEBI" id="CHEBI:57540"/>
    </ligand>
</feature>
<feature type="binding site" evidence="1">
    <location>
        <position position="140"/>
    </location>
    <ligand>
        <name>NAD(+)</name>
        <dbReference type="ChEBI" id="CHEBI:57540"/>
    </ligand>
</feature>
<feature type="binding site" evidence="1">
    <location>
        <position position="186"/>
    </location>
    <ligand>
        <name>NAD(+)</name>
        <dbReference type="ChEBI" id="CHEBI:57540"/>
    </ligand>
</feature>
<feature type="binding site" evidence="1">
    <location>
        <position position="300"/>
    </location>
    <ligand>
        <name>NAD(+)</name>
        <dbReference type="ChEBI" id="CHEBI:57540"/>
    </ligand>
</feature>
<feature type="binding site" evidence="1">
    <location>
        <position position="324"/>
    </location>
    <ligand>
        <name>NAD(+)</name>
        <dbReference type="ChEBI" id="CHEBI:57540"/>
    </ligand>
</feature>
<feature type="binding site" evidence="1">
    <location>
        <position position="418"/>
    </location>
    <ligand>
        <name>Zn(2+)</name>
        <dbReference type="ChEBI" id="CHEBI:29105"/>
    </ligand>
</feature>
<feature type="binding site" evidence="1">
    <location>
        <position position="421"/>
    </location>
    <ligand>
        <name>Zn(2+)</name>
        <dbReference type="ChEBI" id="CHEBI:29105"/>
    </ligand>
</feature>
<feature type="binding site" evidence="1">
    <location>
        <position position="436"/>
    </location>
    <ligand>
        <name>Zn(2+)</name>
        <dbReference type="ChEBI" id="CHEBI:29105"/>
    </ligand>
</feature>
<feature type="binding site" evidence="1">
    <location>
        <position position="442"/>
    </location>
    <ligand>
        <name>Zn(2+)</name>
        <dbReference type="ChEBI" id="CHEBI:29105"/>
    </ligand>
</feature>
<gene>
    <name evidence="1" type="primary">ligA</name>
    <name type="ordered locus">Cphamn1_0463</name>
</gene>
<sequence>MDKKQAVAEIIRLREEIDRHNYRYYVLARPEISDFQYDAMLEKLVALEGEFPELKTSDSPSQRVGGGITKEFPTVEHREPMLSLSNTYSIEEVGEFYHRVVKLLPEEHRDSPEFVAELKFDGVAVSLLYRDGLLVRGATRGDGSQGDDITGNIRTIRSVPLRLGNPSGSGEGVERYEGREIEVRGEVFMTKTDFAVLNEGRPEEERFANPRNATAGTLKLQDSGEVSRRKMVFVAYYLKESSAEIISHAERLELLERLGFYTGGEHRVCRTLKDIREYIDGWQKKRLTGLPYEIDGIVLKLNNTALRDELGATSKSPRWAIAYKFPAERARTVIRSIVFQVGRLGTITPVAELEPVRLAGTTVSRSTLHNLEEVERLDVRLHDTVVIEKSGEIIPKVISVVEEKRRPGTLPVVVPESCPSCGTPLVKPPNEVHYYCPNSEGCPAQTKARIEHFASRNAMDINGLGKAIVEQLVSSGMVVDAGDLYRLTPDLIMRLDRQAEKSAGNLVNAIAKSRNREYFRVLFALGIRHVGIATARELAGAYPTLDMLCKASVEALSDVTDVGPVIAESVHAFFRKPSATAMIEKLREAGVRLEAEKTKKPVNLNFDGMKVIFTGALERYTRDEAAGLVRERGGKTVASVSKNTNLVVYGKEPGSKLEKARKLGVRVITESEFEEMLGEVGSNE</sequence>
<accession>B3EM49</accession>
<proteinExistence type="inferred from homology"/>